<feature type="chain" id="PRO_0000231917" description="RNA pyrophosphohydrolase">
    <location>
        <begin position="1"/>
        <end position="174"/>
    </location>
</feature>
<feature type="domain" description="Nudix hydrolase" evidence="1">
    <location>
        <begin position="6"/>
        <end position="149"/>
    </location>
</feature>
<feature type="short sequence motif" description="Nudix box">
    <location>
        <begin position="38"/>
        <end position="59"/>
    </location>
</feature>
<accession>Q5F753</accession>
<reference key="1">
    <citation type="submission" date="2003-03" db="EMBL/GenBank/DDBJ databases">
        <title>The complete genome sequence of Neisseria gonorrhoeae.</title>
        <authorList>
            <person name="Lewis L.A."/>
            <person name="Gillaspy A.F."/>
            <person name="McLaughlin R.E."/>
            <person name="Gipson M."/>
            <person name="Ducey T.F."/>
            <person name="Ownbey T."/>
            <person name="Hartman K."/>
            <person name="Nydick C."/>
            <person name="Carson M.B."/>
            <person name="Vaughn J."/>
            <person name="Thomson C."/>
            <person name="Song L."/>
            <person name="Lin S."/>
            <person name="Yuan X."/>
            <person name="Najar F."/>
            <person name="Zhan M."/>
            <person name="Ren Q."/>
            <person name="Zhu H."/>
            <person name="Qi S."/>
            <person name="Kenton S.M."/>
            <person name="Lai H."/>
            <person name="White J.D."/>
            <person name="Clifton S."/>
            <person name="Roe B.A."/>
            <person name="Dyer D.W."/>
        </authorList>
    </citation>
    <scope>NUCLEOTIDE SEQUENCE [LARGE SCALE GENOMIC DNA]</scope>
    <source>
        <strain>ATCC 700825 / FA 1090</strain>
    </source>
</reference>
<gene>
    <name evidence="1" type="primary">rppH</name>
    <name evidence="1" type="synonym">nudH</name>
    <name type="ordered locus">NGO_1334</name>
</gene>
<name>RPPH_NEIG1</name>
<evidence type="ECO:0000255" key="1">
    <source>
        <dbReference type="HAMAP-Rule" id="MF_00298"/>
    </source>
</evidence>
<evidence type="ECO:0000305" key="2"/>
<protein>
    <recommendedName>
        <fullName evidence="1">RNA pyrophosphohydrolase</fullName>
        <ecNumber evidence="1">3.6.1.-</ecNumber>
    </recommendedName>
    <alternativeName>
        <fullName evidence="1">(Di)nucleoside polyphosphate hydrolase</fullName>
    </alternativeName>
</protein>
<sequence length="174" mass="21044">MLDREGYRPNVGIILINERNEVFWGKRVREHSWQFPQGGIKPGESPETAMYRELYEEVGLLPQHVKIVGRTRDWLRYDVPNNWVRREWRGSYRGQKQIWYLLRLTGRDCDVNLRATRHPEFDGWRWHQYWAPVDEVIDFKRDVYLEALKELSSRFLRGMESYEDFAARQPSGNR</sequence>
<dbReference type="EC" id="3.6.1.-" evidence="1"/>
<dbReference type="EMBL" id="AE004969">
    <property type="protein sequence ID" value="AAW89984.1"/>
    <property type="status" value="ALT_INIT"/>
    <property type="molecule type" value="Genomic_DNA"/>
</dbReference>
<dbReference type="RefSeq" id="YP_208396.1">
    <property type="nucleotide sequence ID" value="NC_002946.2"/>
</dbReference>
<dbReference type="SMR" id="Q5F753"/>
<dbReference type="STRING" id="242231.NGO_1334"/>
<dbReference type="DNASU" id="3282046"/>
<dbReference type="KEGG" id="ngo:NGO_1334"/>
<dbReference type="PATRIC" id="fig|242231.10.peg.1568"/>
<dbReference type="HOGENOM" id="CLU_087195_1_1_4"/>
<dbReference type="Proteomes" id="UP000000535">
    <property type="component" value="Chromosome"/>
</dbReference>
<dbReference type="GO" id="GO:0016462">
    <property type="term" value="F:pyrophosphatase activity"/>
    <property type="evidence" value="ECO:0007669"/>
    <property type="project" value="UniProtKB-ARBA"/>
</dbReference>
<dbReference type="CDD" id="cd03671">
    <property type="entry name" value="NUDIX_Ap4A_hydrolase_plant_like"/>
    <property type="match status" value="1"/>
</dbReference>
<dbReference type="FunFam" id="3.90.79.10:FF:000001">
    <property type="entry name" value="RNA pyrophosphohydrolase"/>
    <property type="match status" value="1"/>
</dbReference>
<dbReference type="Gene3D" id="3.90.79.10">
    <property type="entry name" value="Nucleoside Triphosphate Pyrophosphohydrolase"/>
    <property type="match status" value="1"/>
</dbReference>
<dbReference type="HAMAP" id="MF_00298">
    <property type="entry name" value="Nudix_RppH"/>
    <property type="match status" value="1"/>
</dbReference>
<dbReference type="InterPro" id="IPR020476">
    <property type="entry name" value="Nudix_hydrolase"/>
</dbReference>
<dbReference type="InterPro" id="IPR015797">
    <property type="entry name" value="NUDIX_hydrolase-like_dom_sf"/>
</dbReference>
<dbReference type="InterPro" id="IPR020084">
    <property type="entry name" value="NUDIX_hydrolase_CS"/>
</dbReference>
<dbReference type="InterPro" id="IPR000086">
    <property type="entry name" value="NUDIX_hydrolase_dom"/>
</dbReference>
<dbReference type="InterPro" id="IPR022927">
    <property type="entry name" value="RppH"/>
</dbReference>
<dbReference type="NCBIfam" id="NF001935">
    <property type="entry name" value="PRK00714.1-2"/>
    <property type="match status" value="1"/>
</dbReference>
<dbReference type="NCBIfam" id="NF001937">
    <property type="entry name" value="PRK00714.1-4"/>
    <property type="match status" value="1"/>
</dbReference>
<dbReference type="NCBIfam" id="NF001938">
    <property type="entry name" value="PRK00714.1-5"/>
    <property type="match status" value="1"/>
</dbReference>
<dbReference type="PANTHER" id="PTHR43736">
    <property type="entry name" value="ADP-RIBOSE PYROPHOSPHATASE"/>
    <property type="match status" value="1"/>
</dbReference>
<dbReference type="PANTHER" id="PTHR43736:SF1">
    <property type="entry name" value="DIHYDRONEOPTERIN TRIPHOSPHATE DIPHOSPHATASE"/>
    <property type="match status" value="1"/>
</dbReference>
<dbReference type="Pfam" id="PF00293">
    <property type="entry name" value="NUDIX"/>
    <property type="match status" value="1"/>
</dbReference>
<dbReference type="PRINTS" id="PR00502">
    <property type="entry name" value="NUDIXFAMILY"/>
</dbReference>
<dbReference type="SUPFAM" id="SSF55811">
    <property type="entry name" value="Nudix"/>
    <property type="match status" value="1"/>
</dbReference>
<dbReference type="PROSITE" id="PS51462">
    <property type="entry name" value="NUDIX"/>
    <property type="match status" value="1"/>
</dbReference>
<dbReference type="PROSITE" id="PS00893">
    <property type="entry name" value="NUDIX_BOX"/>
    <property type="match status" value="1"/>
</dbReference>
<organism>
    <name type="scientific">Neisseria gonorrhoeae (strain ATCC 700825 / FA 1090)</name>
    <dbReference type="NCBI Taxonomy" id="242231"/>
    <lineage>
        <taxon>Bacteria</taxon>
        <taxon>Pseudomonadati</taxon>
        <taxon>Pseudomonadota</taxon>
        <taxon>Betaproteobacteria</taxon>
        <taxon>Neisseriales</taxon>
        <taxon>Neisseriaceae</taxon>
        <taxon>Neisseria</taxon>
    </lineage>
</organism>
<proteinExistence type="inferred from homology"/>
<keyword id="KW-0378">Hydrolase</keyword>
<keyword id="KW-1185">Reference proteome</keyword>
<comment type="function">
    <text evidence="1">Accelerates the degradation of transcripts by removing pyrophosphate from the 5'-end of triphosphorylated RNA, leading to a more labile monophosphorylated state that can stimulate subsequent ribonuclease cleavage.</text>
</comment>
<comment type="cofactor">
    <cofactor evidence="1">
        <name>a divalent metal cation</name>
        <dbReference type="ChEBI" id="CHEBI:60240"/>
    </cofactor>
</comment>
<comment type="similarity">
    <text evidence="1">Belongs to the Nudix hydrolase family. RppH subfamily.</text>
</comment>
<comment type="sequence caution" evidence="2">
    <conflict type="erroneous initiation">
        <sequence resource="EMBL-CDS" id="AAW89984"/>
    </conflict>
</comment>